<comment type="function">
    <text evidence="1 2">Plays an essential role in early embryonic development. Plays an important role in the regulation of centriole duplication.</text>
</comment>
<comment type="subcellular location">
    <subcellularLocation>
        <location evidence="4">Cytoplasm</location>
        <location evidence="4">Cytosol</location>
    </subcellularLocation>
    <subcellularLocation>
        <location evidence="1">Cytoplasm</location>
        <location evidence="1">Cytoskeleton</location>
        <location evidence="1">Microtubule organizing center</location>
        <location evidence="1">Centrosome</location>
        <location evidence="1">Centriole</location>
    </subcellularLocation>
</comment>
<reference key="1">
    <citation type="submission" date="2005-06" db="EMBL/GenBank/DDBJ databases">
        <authorList>
            <consortium name="NIH - Xenopus Gene Collection (XGC) project"/>
        </authorList>
    </citation>
    <scope>NUCLEOTIDE SEQUENCE [LARGE SCALE MRNA]</scope>
    <source>
        <tissue>Egg</tissue>
    </source>
</reference>
<sequence>MSTSINLKNTQFYKEVRGVSMENQRNLRSMSNRMLSVNFPPSKCALWDPAPMGDPFGLHFSYYRNPRLLVSEKALRLSSRHAKTGRKPFSCFLLGTFSVDEDEEGVTLTVDRFDPGREKTGSGSSKVPTAQLPGDFIIPCTISIGKGSNNVIVHTPEDFTSSFMSLQSHLHGKEALDLAKLLAMRAHITYTENMDNLHFDLHWAAVTVANTFESTPIKPVPIIPTALARNLGSHNNIAHLQGTHKSGYLTMDQTRKLLLVLESDPKVYMLPLVGIWLSGITHIHSPQVWAACLRYIFSSSIHERVLSESGSFLIILYSLTHKEPEFYECSPCVKHDPLGFQLLTCQDTLHLFKNAEVSKNPLLRFELSSECQELEADLFNETCKNKSTTVFKQSPLPNKLSTSDHDSGVEEEDFSPRPSPRPHPSVQQVSRIHPSVPELSLVFSSFFDPKSASHNPENRTRNNSPFSSTPQNVNNMFAGAPKPNKEPQPCDNQASGLLPRPAPSLNTNSTAMKPSKVKSSPADYQPPHLQSSNQIRRNSTSTSSAFSTPRSGCSPDSTVHQVKGSCEQEQNINGSAQPQGTTPLMRSGSYSRQVSSNFPNHNVTFPLHSRHVAEVAKPSPNLAPFHQTNVCTSCHSLVSCHSKNCWPAMGHLTYHTMENPPETCESVMPAYQNVVCPSVCCPQTAGKTEFCSPVDLVLLSPGRRDSLPLNPCSPHTCRHTPPPVIPTATGMLGLSTEAYRLFAEQDKQLKLLQAQIQRLLEAQAAESEPSKTTIPNNSKQKQVESVSTEQEIKTSVSIAVSTGASLFWNPPCPEKEESMDKQDDSAFCNEFSVNVNTEDTSHATITSSIRAVDIHSFSESTQLTDRGNCTASLHVSHERDDASYPLPDVQQDINNSKSLSNQTDHTESPNTAEIDSGVSAVPPEKFYQDLLAQVNNLLKTSSTEDEMTSTKIDSGHIIEKTESLPCNPTENNDKNVLKATLKQLKSLGVNIDMNTSELQATKADTADSASILACINPEAVIPRLNYMSFSNIGLSGFVPNGVDLSMEANAIALKYLNESQLNQLSLSHANKNKQSDSISYNSLLPGTTEKSMVGLSLISPSNMSFATKKYMKRYGLIESSDSSMEEPDLANASSFALTPMSSDSTSENRLFFNDSCKDGNFVTCEEQKRKNADVDSAIGWAHHPETNKLRNITNEISGKLINVAPLQEDRPLHFLKDLKARTKLSAGKAQFTQHPEKENTGDVQFFHEKHDGFSGKKSLGGPSTVGDILDVNRLRQLPKLF</sequence>
<proteinExistence type="evidence at transcript level"/>
<dbReference type="EMBL" id="BC070761">
    <property type="protein sequence ID" value="AAH70761.1"/>
    <property type="molecule type" value="mRNA"/>
</dbReference>
<dbReference type="EMBL" id="BC097918">
    <property type="protein sequence ID" value="AAH97918.1"/>
    <property type="molecule type" value="mRNA"/>
</dbReference>
<dbReference type="RefSeq" id="NP_001084821.1">
    <property type="nucleotide sequence ID" value="NM_001091352.1"/>
</dbReference>
<dbReference type="SMR" id="Q4V7H1"/>
<dbReference type="DNASU" id="431864"/>
<dbReference type="GeneID" id="431864"/>
<dbReference type="KEGG" id="xla:431864"/>
<dbReference type="AGR" id="Xenbase:XB-GENE-975755"/>
<dbReference type="CTD" id="431864"/>
<dbReference type="Xenbase" id="XB-GENE-975755">
    <property type="gene designation" value="stil.L"/>
</dbReference>
<dbReference type="OrthoDB" id="76173at2759"/>
<dbReference type="Proteomes" id="UP000186698">
    <property type="component" value="Chromosome 4L"/>
</dbReference>
<dbReference type="Bgee" id="431864">
    <property type="expression patterns" value="Expressed in egg cell and 18 other cell types or tissues"/>
</dbReference>
<dbReference type="GO" id="GO:0005814">
    <property type="term" value="C:centriole"/>
    <property type="evidence" value="ECO:0000250"/>
    <property type="project" value="UniProtKB"/>
</dbReference>
<dbReference type="GO" id="GO:0005829">
    <property type="term" value="C:cytosol"/>
    <property type="evidence" value="ECO:0007669"/>
    <property type="project" value="UniProtKB-SubCell"/>
</dbReference>
<dbReference type="GO" id="GO:0005815">
    <property type="term" value="C:microtubule organizing center"/>
    <property type="evidence" value="ECO:0000318"/>
    <property type="project" value="GO_Central"/>
</dbReference>
<dbReference type="GO" id="GO:0031023">
    <property type="term" value="P:microtubule organizing center organization"/>
    <property type="evidence" value="ECO:0000318"/>
    <property type="project" value="GO_Central"/>
</dbReference>
<dbReference type="GO" id="GO:0007052">
    <property type="term" value="P:mitotic spindle organization"/>
    <property type="evidence" value="ECO:0000318"/>
    <property type="project" value="GO_Central"/>
</dbReference>
<dbReference type="GO" id="GO:0071539">
    <property type="term" value="P:protein localization to centrosome"/>
    <property type="evidence" value="ECO:0000318"/>
    <property type="project" value="GO_Central"/>
</dbReference>
<dbReference type="GO" id="GO:0046599">
    <property type="term" value="P:regulation of centriole replication"/>
    <property type="evidence" value="ECO:0000250"/>
    <property type="project" value="UniProtKB"/>
</dbReference>
<dbReference type="GO" id="GO:0007224">
    <property type="term" value="P:smoothened signaling pathway"/>
    <property type="evidence" value="ECO:0000318"/>
    <property type="project" value="GO_Central"/>
</dbReference>
<dbReference type="InterPro" id="IPR026123">
    <property type="entry name" value="Sil"/>
</dbReference>
<dbReference type="PANTHER" id="PTHR15128:SF0">
    <property type="entry name" value="SCL-INTERRUPTING LOCUS PROTEIN"/>
    <property type="match status" value="1"/>
</dbReference>
<dbReference type="PANTHER" id="PTHR15128">
    <property type="entry name" value="TAL1 SCL INTERRUPTING LOCUS"/>
    <property type="match status" value="1"/>
</dbReference>
<dbReference type="Pfam" id="PF15253">
    <property type="entry name" value="STIL_N"/>
    <property type="match status" value="1"/>
</dbReference>
<gene>
    <name type="primary">stil</name>
</gene>
<name>STIL_XENLA</name>
<accession>Q4V7H1</accession>
<accession>Q6NRI9</accession>
<feature type="chain" id="PRO_0000271334" description="SCL-interrupting locus protein homolog">
    <location>
        <begin position="1"/>
        <end position="1281"/>
    </location>
</feature>
<feature type="region of interest" description="Disordered" evidence="3">
    <location>
        <begin position="390"/>
        <end position="431"/>
    </location>
</feature>
<feature type="region of interest" description="Disordered" evidence="3">
    <location>
        <begin position="450"/>
        <end position="592"/>
    </location>
</feature>
<feature type="region of interest" description="Disordered" evidence="3">
    <location>
        <begin position="765"/>
        <end position="790"/>
    </location>
</feature>
<feature type="region of interest" description="Disordered" evidence="3">
    <location>
        <begin position="879"/>
        <end position="915"/>
    </location>
</feature>
<feature type="compositionally biased region" description="Polar residues" evidence="3">
    <location>
        <begin position="390"/>
        <end position="401"/>
    </location>
</feature>
<feature type="compositionally biased region" description="Polar residues" evidence="3">
    <location>
        <begin position="461"/>
        <end position="475"/>
    </location>
</feature>
<feature type="compositionally biased region" description="Polar residues" evidence="3">
    <location>
        <begin position="528"/>
        <end position="560"/>
    </location>
</feature>
<feature type="compositionally biased region" description="Polar residues" evidence="3">
    <location>
        <begin position="567"/>
        <end position="592"/>
    </location>
</feature>
<feature type="compositionally biased region" description="Polar residues" evidence="3">
    <location>
        <begin position="770"/>
        <end position="790"/>
    </location>
</feature>
<feature type="compositionally biased region" description="Polar residues" evidence="3">
    <location>
        <begin position="891"/>
        <end position="913"/>
    </location>
</feature>
<keyword id="KW-0963">Cytoplasm</keyword>
<keyword id="KW-0206">Cytoskeleton</keyword>
<keyword id="KW-0217">Developmental protein</keyword>
<keyword id="KW-1185">Reference proteome</keyword>
<protein>
    <recommendedName>
        <fullName>SCL-interrupting locus protein homolog</fullName>
    </recommendedName>
</protein>
<evidence type="ECO:0000250" key="1">
    <source>
        <dbReference type="UniProtKB" id="Q15468"/>
    </source>
</evidence>
<evidence type="ECO:0000250" key="2">
    <source>
        <dbReference type="UniProtKB" id="Q8JGS1"/>
    </source>
</evidence>
<evidence type="ECO:0000256" key="3">
    <source>
        <dbReference type="SAM" id="MobiDB-lite"/>
    </source>
</evidence>
<evidence type="ECO:0000305" key="4"/>
<organism>
    <name type="scientific">Xenopus laevis</name>
    <name type="common">African clawed frog</name>
    <dbReference type="NCBI Taxonomy" id="8355"/>
    <lineage>
        <taxon>Eukaryota</taxon>
        <taxon>Metazoa</taxon>
        <taxon>Chordata</taxon>
        <taxon>Craniata</taxon>
        <taxon>Vertebrata</taxon>
        <taxon>Euteleostomi</taxon>
        <taxon>Amphibia</taxon>
        <taxon>Batrachia</taxon>
        <taxon>Anura</taxon>
        <taxon>Pipoidea</taxon>
        <taxon>Pipidae</taxon>
        <taxon>Xenopodinae</taxon>
        <taxon>Xenopus</taxon>
        <taxon>Xenopus</taxon>
    </lineage>
</organism>